<feature type="chain" id="PRO_0000154835" description="Probable tRNA sulfurtransferase">
    <location>
        <begin position="1"/>
        <end position="385"/>
    </location>
</feature>
<feature type="domain" description="THUMP" evidence="1">
    <location>
        <begin position="57"/>
        <end position="160"/>
    </location>
</feature>
<feature type="binding site" evidence="1">
    <location>
        <begin position="180"/>
        <end position="181"/>
    </location>
    <ligand>
        <name>ATP</name>
        <dbReference type="ChEBI" id="CHEBI:30616"/>
    </ligand>
</feature>
<feature type="binding site" evidence="1">
    <location>
        <begin position="205"/>
        <end position="206"/>
    </location>
    <ligand>
        <name>ATP</name>
        <dbReference type="ChEBI" id="CHEBI:30616"/>
    </ligand>
</feature>
<feature type="binding site" evidence="1">
    <location>
        <position position="262"/>
    </location>
    <ligand>
        <name>ATP</name>
        <dbReference type="ChEBI" id="CHEBI:30616"/>
    </ligand>
</feature>
<feature type="binding site" evidence="1">
    <location>
        <position position="284"/>
    </location>
    <ligand>
        <name>ATP</name>
        <dbReference type="ChEBI" id="CHEBI:30616"/>
    </ligand>
</feature>
<feature type="binding site" evidence="1">
    <location>
        <position position="293"/>
    </location>
    <ligand>
        <name>ATP</name>
        <dbReference type="ChEBI" id="CHEBI:30616"/>
    </ligand>
</feature>
<reference key="1">
    <citation type="journal article" date="2002" name="Proc. Natl. Acad. Sci. U.S.A.">
        <title>Complete genome sequence of Clostridium perfringens, an anaerobic flesh-eater.</title>
        <authorList>
            <person name="Shimizu T."/>
            <person name="Ohtani K."/>
            <person name="Hirakawa H."/>
            <person name="Ohshima K."/>
            <person name="Yamashita A."/>
            <person name="Shiba T."/>
            <person name="Ogasawara N."/>
            <person name="Hattori M."/>
            <person name="Kuhara S."/>
            <person name="Hayashi H."/>
        </authorList>
    </citation>
    <scope>NUCLEOTIDE SEQUENCE [LARGE SCALE GENOMIC DNA]</scope>
    <source>
        <strain>13 / Type A</strain>
    </source>
</reference>
<organism>
    <name type="scientific">Clostridium perfringens (strain 13 / Type A)</name>
    <dbReference type="NCBI Taxonomy" id="195102"/>
    <lineage>
        <taxon>Bacteria</taxon>
        <taxon>Bacillati</taxon>
        <taxon>Bacillota</taxon>
        <taxon>Clostridia</taxon>
        <taxon>Eubacteriales</taxon>
        <taxon>Clostridiaceae</taxon>
        <taxon>Clostridium</taxon>
    </lineage>
</organism>
<sequence length="385" mass="44131">MNNLILVKYASEIFLKGLNKNKFERKLKENIRKKLKDIDHEFITDQNRWFIKSEDLDGVIERVKKVFGVKELCLVTQVTGDFDSIKEEGLKKIKESKAKSFKVETNRANKKFPMNSMEVSRAVGGYILSELGDEIEVDIHNPECKLYVEIRGNAYVFTDKDKIKAVGGLPYGMNGSTMVMLSGGIDSPVAAYLMARRGVETHCVYYHSHPYTSERAKDKVKELAKIVGRYTEKITLYVVPFTEIQMDIIEKCREDELTIIMRRFMMRVACELSEKKKIQSITTGESIGQVASQTMEGLIVSNDASDRPVFRPLIAMDKEDIMDIARDIDTYETSILPYEDCCTIFVPKHPKTKPRVKDMIIAERKLDIEALVNKAIDEMETFIFE</sequence>
<proteinExistence type="inferred from homology"/>
<protein>
    <recommendedName>
        <fullName evidence="1">Probable tRNA sulfurtransferase</fullName>
        <ecNumber evidence="1">2.8.1.4</ecNumber>
    </recommendedName>
    <alternativeName>
        <fullName evidence="1">Sulfur carrier protein ThiS sulfurtransferase</fullName>
    </alternativeName>
    <alternativeName>
        <fullName evidence="1">Thiamine biosynthesis protein ThiI</fullName>
    </alternativeName>
    <alternativeName>
        <fullName evidence="1">tRNA 4-thiouridine synthase</fullName>
    </alternativeName>
</protein>
<keyword id="KW-0067">ATP-binding</keyword>
<keyword id="KW-0963">Cytoplasm</keyword>
<keyword id="KW-0547">Nucleotide-binding</keyword>
<keyword id="KW-1185">Reference proteome</keyword>
<keyword id="KW-0694">RNA-binding</keyword>
<keyword id="KW-0784">Thiamine biosynthesis</keyword>
<keyword id="KW-0808">Transferase</keyword>
<keyword id="KW-0820">tRNA-binding</keyword>
<gene>
    <name evidence="1" type="primary">thiI</name>
    <name type="ordered locus">CPE1412</name>
</gene>
<dbReference type="EC" id="2.8.1.4" evidence="1"/>
<dbReference type="EMBL" id="BA000016">
    <property type="protein sequence ID" value="BAB81118.1"/>
    <property type="molecule type" value="Genomic_DNA"/>
</dbReference>
<dbReference type="RefSeq" id="WP_011010434.1">
    <property type="nucleotide sequence ID" value="NC_003366.1"/>
</dbReference>
<dbReference type="SMR" id="Q8XKI3"/>
<dbReference type="STRING" id="195102.gene:10490676"/>
<dbReference type="KEGG" id="cpe:CPE1412"/>
<dbReference type="HOGENOM" id="CLU_037952_4_0_9"/>
<dbReference type="UniPathway" id="UPA00060"/>
<dbReference type="Proteomes" id="UP000000818">
    <property type="component" value="Chromosome"/>
</dbReference>
<dbReference type="GO" id="GO:0005829">
    <property type="term" value="C:cytosol"/>
    <property type="evidence" value="ECO:0007669"/>
    <property type="project" value="TreeGrafter"/>
</dbReference>
<dbReference type="GO" id="GO:0005524">
    <property type="term" value="F:ATP binding"/>
    <property type="evidence" value="ECO:0007669"/>
    <property type="project" value="UniProtKB-UniRule"/>
</dbReference>
<dbReference type="GO" id="GO:0004810">
    <property type="term" value="F:CCA tRNA nucleotidyltransferase activity"/>
    <property type="evidence" value="ECO:0007669"/>
    <property type="project" value="InterPro"/>
</dbReference>
<dbReference type="GO" id="GO:0000049">
    <property type="term" value="F:tRNA binding"/>
    <property type="evidence" value="ECO:0007669"/>
    <property type="project" value="UniProtKB-UniRule"/>
</dbReference>
<dbReference type="GO" id="GO:0140741">
    <property type="term" value="F:tRNA-uracil-4 sulfurtransferase activity"/>
    <property type="evidence" value="ECO:0007669"/>
    <property type="project" value="UniProtKB-EC"/>
</dbReference>
<dbReference type="GO" id="GO:0009228">
    <property type="term" value="P:thiamine biosynthetic process"/>
    <property type="evidence" value="ECO:0007669"/>
    <property type="project" value="UniProtKB-KW"/>
</dbReference>
<dbReference type="GO" id="GO:0009229">
    <property type="term" value="P:thiamine diphosphate biosynthetic process"/>
    <property type="evidence" value="ECO:0007669"/>
    <property type="project" value="UniProtKB-UniRule"/>
</dbReference>
<dbReference type="GO" id="GO:0052837">
    <property type="term" value="P:thiazole biosynthetic process"/>
    <property type="evidence" value="ECO:0007669"/>
    <property type="project" value="TreeGrafter"/>
</dbReference>
<dbReference type="GO" id="GO:0002937">
    <property type="term" value="P:tRNA 4-thiouridine biosynthesis"/>
    <property type="evidence" value="ECO:0007669"/>
    <property type="project" value="TreeGrafter"/>
</dbReference>
<dbReference type="CDD" id="cd01712">
    <property type="entry name" value="PPase_ThiI"/>
    <property type="match status" value="1"/>
</dbReference>
<dbReference type="CDD" id="cd11716">
    <property type="entry name" value="THUMP_ThiI"/>
    <property type="match status" value="1"/>
</dbReference>
<dbReference type="FunFam" id="3.40.50.620:FF:000053">
    <property type="entry name" value="Probable tRNA sulfurtransferase"/>
    <property type="match status" value="1"/>
</dbReference>
<dbReference type="Gene3D" id="3.30.2130.30">
    <property type="match status" value="1"/>
</dbReference>
<dbReference type="Gene3D" id="3.40.50.620">
    <property type="entry name" value="HUPs"/>
    <property type="match status" value="1"/>
</dbReference>
<dbReference type="HAMAP" id="MF_00021">
    <property type="entry name" value="ThiI"/>
    <property type="match status" value="1"/>
</dbReference>
<dbReference type="InterPro" id="IPR014729">
    <property type="entry name" value="Rossmann-like_a/b/a_fold"/>
</dbReference>
<dbReference type="InterPro" id="IPR020536">
    <property type="entry name" value="ThiI_AANH"/>
</dbReference>
<dbReference type="InterPro" id="IPR054173">
    <property type="entry name" value="ThiI_fer"/>
</dbReference>
<dbReference type="InterPro" id="IPR049961">
    <property type="entry name" value="ThiI_N"/>
</dbReference>
<dbReference type="InterPro" id="IPR004114">
    <property type="entry name" value="THUMP_dom"/>
</dbReference>
<dbReference type="InterPro" id="IPR049962">
    <property type="entry name" value="THUMP_ThiI"/>
</dbReference>
<dbReference type="InterPro" id="IPR003720">
    <property type="entry name" value="tRNA_STrfase"/>
</dbReference>
<dbReference type="InterPro" id="IPR050102">
    <property type="entry name" value="tRNA_sulfurtransferase_ThiI"/>
</dbReference>
<dbReference type="NCBIfam" id="TIGR00342">
    <property type="entry name" value="tRNA uracil 4-sulfurtransferase ThiI"/>
    <property type="match status" value="1"/>
</dbReference>
<dbReference type="PANTHER" id="PTHR43209">
    <property type="entry name" value="TRNA SULFURTRANSFERASE"/>
    <property type="match status" value="1"/>
</dbReference>
<dbReference type="PANTHER" id="PTHR43209:SF1">
    <property type="entry name" value="TRNA SULFURTRANSFERASE"/>
    <property type="match status" value="1"/>
</dbReference>
<dbReference type="Pfam" id="PF02568">
    <property type="entry name" value="ThiI"/>
    <property type="match status" value="1"/>
</dbReference>
<dbReference type="Pfam" id="PF22025">
    <property type="entry name" value="ThiI_fer"/>
    <property type="match status" value="1"/>
</dbReference>
<dbReference type="Pfam" id="PF02926">
    <property type="entry name" value="THUMP"/>
    <property type="match status" value="1"/>
</dbReference>
<dbReference type="SMART" id="SM00981">
    <property type="entry name" value="THUMP"/>
    <property type="match status" value="1"/>
</dbReference>
<dbReference type="SUPFAM" id="SSF52402">
    <property type="entry name" value="Adenine nucleotide alpha hydrolases-like"/>
    <property type="match status" value="1"/>
</dbReference>
<dbReference type="SUPFAM" id="SSF143437">
    <property type="entry name" value="THUMP domain-like"/>
    <property type="match status" value="1"/>
</dbReference>
<dbReference type="PROSITE" id="PS51165">
    <property type="entry name" value="THUMP"/>
    <property type="match status" value="1"/>
</dbReference>
<name>THII_CLOPE</name>
<accession>Q8XKI3</accession>
<evidence type="ECO:0000255" key="1">
    <source>
        <dbReference type="HAMAP-Rule" id="MF_00021"/>
    </source>
</evidence>
<comment type="function">
    <text evidence="1">Catalyzes the ATP-dependent transfer of a sulfur to tRNA to produce 4-thiouridine in position 8 of tRNAs, which functions as a near-UV photosensor. Also catalyzes the transfer of sulfur to the sulfur carrier protein ThiS, forming ThiS-thiocarboxylate. This is a step in the synthesis of thiazole, in the thiamine biosynthesis pathway. The sulfur is donated as persulfide by IscS.</text>
</comment>
<comment type="catalytic activity">
    <reaction evidence="1">
        <text>[ThiI sulfur-carrier protein]-S-sulfanyl-L-cysteine + a uridine in tRNA + 2 reduced [2Fe-2S]-[ferredoxin] + ATP + H(+) = [ThiI sulfur-carrier protein]-L-cysteine + a 4-thiouridine in tRNA + 2 oxidized [2Fe-2S]-[ferredoxin] + AMP + diphosphate</text>
        <dbReference type="Rhea" id="RHEA:24176"/>
        <dbReference type="Rhea" id="RHEA-COMP:10000"/>
        <dbReference type="Rhea" id="RHEA-COMP:10001"/>
        <dbReference type="Rhea" id="RHEA-COMP:13337"/>
        <dbReference type="Rhea" id="RHEA-COMP:13338"/>
        <dbReference type="Rhea" id="RHEA-COMP:13339"/>
        <dbReference type="Rhea" id="RHEA-COMP:13340"/>
        <dbReference type="ChEBI" id="CHEBI:15378"/>
        <dbReference type="ChEBI" id="CHEBI:29950"/>
        <dbReference type="ChEBI" id="CHEBI:30616"/>
        <dbReference type="ChEBI" id="CHEBI:33019"/>
        <dbReference type="ChEBI" id="CHEBI:33737"/>
        <dbReference type="ChEBI" id="CHEBI:33738"/>
        <dbReference type="ChEBI" id="CHEBI:61963"/>
        <dbReference type="ChEBI" id="CHEBI:65315"/>
        <dbReference type="ChEBI" id="CHEBI:136798"/>
        <dbReference type="ChEBI" id="CHEBI:456215"/>
        <dbReference type="EC" id="2.8.1.4"/>
    </reaction>
</comment>
<comment type="catalytic activity">
    <reaction evidence="1">
        <text>[ThiS sulfur-carrier protein]-C-terminal Gly-Gly-AMP + S-sulfanyl-L-cysteinyl-[cysteine desulfurase] + AH2 = [ThiS sulfur-carrier protein]-C-terminal-Gly-aminoethanethioate + L-cysteinyl-[cysteine desulfurase] + A + AMP + 2 H(+)</text>
        <dbReference type="Rhea" id="RHEA:43340"/>
        <dbReference type="Rhea" id="RHEA-COMP:12157"/>
        <dbReference type="Rhea" id="RHEA-COMP:12158"/>
        <dbReference type="Rhea" id="RHEA-COMP:12910"/>
        <dbReference type="Rhea" id="RHEA-COMP:19908"/>
        <dbReference type="ChEBI" id="CHEBI:13193"/>
        <dbReference type="ChEBI" id="CHEBI:15378"/>
        <dbReference type="ChEBI" id="CHEBI:17499"/>
        <dbReference type="ChEBI" id="CHEBI:29950"/>
        <dbReference type="ChEBI" id="CHEBI:61963"/>
        <dbReference type="ChEBI" id="CHEBI:90618"/>
        <dbReference type="ChEBI" id="CHEBI:232372"/>
        <dbReference type="ChEBI" id="CHEBI:456215"/>
    </reaction>
</comment>
<comment type="pathway">
    <text evidence="1">Cofactor biosynthesis; thiamine diphosphate biosynthesis.</text>
</comment>
<comment type="subcellular location">
    <subcellularLocation>
        <location evidence="1">Cytoplasm</location>
    </subcellularLocation>
</comment>
<comment type="similarity">
    <text evidence="1">Belongs to the ThiI family.</text>
</comment>